<accession>Q5LQM7</accession>
<organism>
    <name type="scientific">Ruegeria pomeroyi (strain ATCC 700808 / DSM 15171 / DSS-3)</name>
    <name type="common">Silicibacter pomeroyi</name>
    <dbReference type="NCBI Taxonomy" id="246200"/>
    <lineage>
        <taxon>Bacteria</taxon>
        <taxon>Pseudomonadati</taxon>
        <taxon>Pseudomonadota</taxon>
        <taxon>Alphaproteobacteria</taxon>
        <taxon>Rhodobacterales</taxon>
        <taxon>Roseobacteraceae</taxon>
        <taxon>Ruegeria</taxon>
    </lineage>
</organism>
<protein>
    <recommendedName>
        <fullName evidence="1">Peptide chain release factor 1</fullName>
        <shortName evidence="1">RF-1</shortName>
    </recommendedName>
</protein>
<sequence>MIPEERLDQITQRFQYLEAAMADGASGSDIAALAKEYSDLRPVVEQIAAWRQLCADMDEARAMLSDPDMKALAEEELPLLKARLPEAEQALQLALLPKDAADARPAMLEIRPGTGGDEAALFAGDLLRMYQRYAEARGWKLELIELQETELGGIKEVVARISGENVFARLKYESGVHRVQRVPETESGGRIHTSAATVAVLPEAQDVDIQIDPGDIRIDTMRSSGAGGQHVNTTDSAVRITHLPSGIVVTSSEKSQHRNREIAMQVLKTRLYDLERQRLDRERSASRSAQVGTGDRSERIRTYNFPQGRMTDHRINLTLYKLDAVMQGDLDEVIDALAADGQARMLAEMGQ</sequence>
<proteinExistence type="inferred from homology"/>
<reference key="1">
    <citation type="journal article" date="2004" name="Nature">
        <title>Genome sequence of Silicibacter pomeroyi reveals adaptations to the marine environment.</title>
        <authorList>
            <person name="Moran M.A."/>
            <person name="Buchan A."/>
            <person name="Gonzalez J.M."/>
            <person name="Heidelberg J.F."/>
            <person name="Whitman W.B."/>
            <person name="Kiene R.P."/>
            <person name="Henriksen J.R."/>
            <person name="King G.M."/>
            <person name="Belas R."/>
            <person name="Fuqua C."/>
            <person name="Brinkac L.M."/>
            <person name="Lewis M."/>
            <person name="Johri S."/>
            <person name="Weaver B."/>
            <person name="Pai G."/>
            <person name="Eisen J.A."/>
            <person name="Rahe E."/>
            <person name="Sheldon W.M."/>
            <person name="Ye W."/>
            <person name="Miller T.R."/>
            <person name="Carlton J."/>
            <person name="Rasko D.A."/>
            <person name="Paulsen I.T."/>
            <person name="Ren Q."/>
            <person name="Daugherty S.C."/>
            <person name="DeBoy R.T."/>
            <person name="Dodson R.J."/>
            <person name="Durkin A.S."/>
            <person name="Madupu R."/>
            <person name="Nelson W.C."/>
            <person name="Sullivan S.A."/>
            <person name="Rosovitz M.J."/>
            <person name="Haft D.H."/>
            <person name="Selengut J."/>
            <person name="Ward N."/>
        </authorList>
    </citation>
    <scope>NUCLEOTIDE SEQUENCE [LARGE SCALE GENOMIC DNA]</scope>
    <source>
        <strain>ATCC 700808 / DSM 15171 / DSS-3</strain>
    </source>
</reference>
<reference key="2">
    <citation type="journal article" date="2014" name="Stand. Genomic Sci.">
        <title>An updated genome annotation for the model marine bacterium Ruegeria pomeroyi DSS-3.</title>
        <authorList>
            <person name="Rivers A.R."/>
            <person name="Smith C.B."/>
            <person name="Moran M.A."/>
        </authorList>
    </citation>
    <scope>GENOME REANNOTATION</scope>
    <source>
        <strain>ATCC 700808 / DSM 15171 / DSS-3</strain>
    </source>
</reference>
<evidence type="ECO:0000255" key="1">
    <source>
        <dbReference type="HAMAP-Rule" id="MF_00093"/>
    </source>
</evidence>
<dbReference type="EMBL" id="CP000031">
    <property type="protein sequence ID" value="AAV95715.1"/>
    <property type="molecule type" value="Genomic_DNA"/>
</dbReference>
<dbReference type="RefSeq" id="WP_011048170.1">
    <property type="nucleotide sequence ID" value="NC_003911.12"/>
</dbReference>
<dbReference type="SMR" id="Q5LQM7"/>
<dbReference type="STRING" id="246200.SPO2461"/>
<dbReference type="PaxDb" id="246200-SPO2461"/>
<dbReference type="KEGG" id="sil:SPO2461"/>
<dbReference type="eggNOG" id="COG0216">
    <property type="taxonomic scope" value="Bacteria"/>
</dbReference>
<dbReference type="HOGENOM" id="CLU_036856_0_1_5"/>
<dbReference type="OrthoDB" id="9806673at2"/>
<dbReference type="Proteomes" id="UP000001023">
    <property type="component" value="Chromosome"/>
</dbReference>
<dbReference type="GO" id="GO:0005737">
    <property type="term" value="C:cytoplasm"/>
    <property type="evidence" value="ECO:0007669"/>
    <property type="project" value="UniProtKB-SubCell"/>
</dbReference>
<dbReference type="GO" id="GO:0016149">
    <property type="term" value="F:translation release factor activity, codon specific"/>
    <property type="evidence" value="ECO:0007669"/>
    <property type="project" value="UniProtKB-UniRule"/>
</dbReference>
<dbReference type="FunFam" id="3.30.160.20:FF:000004">
    <property type="entry name" value="Peptide chain release factor 1"/>
    <property type="match status" value="1"/>
</dbReference>
<dbReference type="FunFam" id="3.30.70.1660:FF:000002">
    <property type="entry name" value="Peptide chain release factor 1"/>
    <property type="match status" value="1"/>
</dbReference>
<dbReference type="FunFam" id="3.30.70.1660:FF:000004">
    <property type="entry name" value="Peptide chain release factor 1"/>
    <property type="match status" value="1"/>
</dbReference>
<dbReference type="Gene3D" id="3.30.160.20">
    <property type="match status" value="1"/>
</dbReference>
<dbReference type="Gene3D" id="3.30.70.1660">
    <property type="match status" value="1"/>
</dbReference>
<dbReference type="Gene3D" id="6.10.140.1950">
    <property type="match status" value="1"/>
</dbReference>
<dbReference type="HAMAP" id="MF_00093">
    <property type="entry name" value="Rel_fac_1"/>
    <property type="match status" value="1"/>
</dbReference>
<dbReference type="InterPro" id="IPR005139">
    <property type="entry name" value="PCRF"/>
</dbReference>
<dbReference type="InterPro" id="IPR000352">
    <property type="entry name" value="Pep_chain_release_fac_I"/>
</dbReference>
<dbReference type="InterPro" id="IPR045853">
    <property type="entry name" value="Pep_chain_release_fac_I_sf"/>
</dbReference>
<dbReference type="InterPro" id="IPR050057">
    <property type="entry name" value="Prokaryotic/Mito_RF"/>
</dbReference>
<dbReference type="InterPro" id="IPR004373">
    <property type="entry name" value="RF-1"/>
</dbReference>
<dbReference type="NCBIfam" id="TIGR00019">
    <property type="entry name" value="prfA"/>
    <property type="match status" value="1"/>
</dbReference>
<dbReference type="NCBIfam" id="NF001859">
    <property type="entry name" value="PRK00591.1"/>
    <property type="match status" value="1"/>
</dbReference>
<dbReference type="PANTHER" id="PTHR43804">
    <property type="entry name" value="LD18447P"/>
    <property type="match status" value="1"/>
</dbReference>
<dbReference type="PANTHER" id="PTHR43804:SF7">
    <property type="entry name" value="LD18447P"/>
    <property type="match status" value="1"/>
</dbReference>
<dbReference type="Pfam" id="PF03462">
    <property type="entry name" value="PCRF"/>
    <property type="match status" value="1"/>
</dbReference>
<dbReference type="Pfam" id="PF00472">
    <property type="entry name" value="RF-1"/>
    <property type="match status" value="1"/>
</dbReference>
<dbReference type="SMART" id="SM00937">
    <property type="entry name" value="PCRF"/>
    <property type="match status" value="1"/>
</dbReference>
<dbReference type="SUPFAM" id="SSF75620">
    <property type="entry name" value="Release factor"/>
    <property type="match status" value="1"/>
</dbReference>
<dbReference type="PROSITE" id="PS00745">
    <property type="entry name" value="RF_PROK_I"/>
    <property type="match status" value="1"/>
</dbReference>
<name>RF1_RUEPO</name>
<gene>
    <name evidence="1" type="primary">prfA</name>
    <name type="ordered locus">SPO2461</name>
</gene>
<feature type="chain" id="PRO_0000263354" description="Peptide chain release factor 1">
    <location>
        <begin position="1"/>
        <end position="351"/>
    </location>
</feature>
<feature type="modified residue" description="N5-methylglutamine" evidence="1">
    <location>
        <position position="229"/>
    </location>
</feature>
<comment type="function">
    <text evidence="1">Peptide chain release factor 1 directs the termination of translation in response to the peptide chain termination codons UAG and UAA.</text>
</comment>
<comment type="subcellular location">
    <subcellularLocation>
        <location evidence="1">Cytoplasm</location>
    </subcellularLocation>
</comment>
<comment type="PTM">
    <text evidence="1">Methylated by PrmC. Methylation increases the termination efficiency of RF1.</text>
</comment>
<comment type="similarity">
    <text evidence="1">Belongs to the prokaryotic/mitochondrial release factor family.</text>
</comment>
<keyword id="KW-0963">Cytoplasm</keyword>
<keyword id="KW-0488">Methylation</keyword>
<keyword id="KW-0648">Protein biosynthesis</keyword>
<keyword id="KW-1185">Reference proteome</keyword>